<reference key="1">
    <citation type="journal article" date="2009" name="PLoS Genet.">
        <title>Organised genome dynamics in the Escherichia coli species results in highly diverse adaptive paths.</title>
        <authorList>
            <person name="Touchon M."/>
            <person name="Hoede C."/>
            <person name="Tenaillon O."/>
            <person name="Barbe V."/>
            <person name="Baeriswyl S."/>
            <person name="Bidet P."/>
            <person name="Bingen E."/>
            <person name="Bonacorsi S."/>
            <person name="Bouchier C."/>
            <person name="Bouvet O."/>
            <person name="Calteau A."/>
            <person name="Chiapello H."/>
            <person name="Clermont O."/>
            <person name="Cruveiller S."/>
            <person name="Danchin A."/>
            <person name="Diard M."/>
            <person name="Dossat C."/>
            <person name="Karoui M.E."/>
            <person name="Frapy E."/>
            <person name="Garry L."/>
            <person name="Ghigo J.M."/>
            <person name="Gilles A.M."/>
            <person name="Johnson J."/>
            <person name="Le Bouguenec C."/>
            <person name="Lescat M."/>
            <person name="Mangenot S."/>
            <person name="Martinez-Jehanne V."/>
            <person name="Matic I."/>
            <person name="Nassif X."/>
            <person name="Oztas S."/>
            <person name="Petit M.A."/>
            <person name="Pichon C."/>
            <person name="Rouy Z."/>
            <person name="Ruf C.S."/>
            <person name="Schneider D."/>
            <person name="Tourret J."/>
            <person name="Vacherie B."/>
            <person name="Vallenet D."/>
            <person name="Medigue C."/>
            <person name="Rocha E.P.C."/>
            <person name="Denamur E."/>
        </authorList>
    </citation>
    <scope>NUCLEOTIDE SEQUENCE [LARGE SCALE GENOMIC DNA]</scope>
    <source>
        <strain>IAI39 / ExPEC</strain>
    </source>
</reference>
<dbReference type="EMBL" id="CU928164">
    <property type="protein sequence ID" value="CAR20394.1"/>
    <property type="molecule type" value="Genomic_DNA"/>
</dbReference>
<dbReference type="RefSeq" id="WP_001243427.1">
    <property type="nucleotide sequence ID" value="NC_011750.1"/>
</dbReference>
<dbReference type="RefSeq" id="YP_002410162.1">
    <property type="nucleotide sequence ID" value="NC_011750.1"/>
</dbReference>
<dbReference type="SMR" id="B7NQY6"/>
<dbReference type="STRING" id="585057.ECIAI39_4288"/>
<dbReference type="KEGG" id="ect:ECIAI39_4288"/>
<dbReference type="PATRIC" id="fig|585057.6.peg.4433"/>
<dbReference type="HOGENOM" id="CLU_046737_4_2_6"/>
<dbReference type="Proteomes" id="UP000000749">
    <property type="component" value="Chromosome"/>
</dbReference>
<dbReference type="GO" id="GO:0005737">
    <property type="term" value="C:cytoplasm"/>
    <property type="evidence" value="ECO:0007669"/>
    <property type="project" value="UniProtKB-SubCell"/>
</dbReference>
<dbReference type="GO" id="GO:0050821">
    <property type="term" value="P:protein stabilization"/>
    <property type="evidence" value="ECO:0007669"/>
    <property type="project" value="UniProtKB-UniRule"/>
</dbReference>
<dbReference type="CDD" id="cd06470">
    <property type="entry name" value="ACD_IbpA-B_like"/>
    <property type="match status" value="1"/>
</dbReference>
<dbReference type="Gene3D" id="2.60.40.790">
    <property type="match status" value="1"/>
</dbReference>
<dbReference type="HAMAP" id="MF_02001">
    <property type="entry name" value="HSP20_IbpB"/>
    <property type="match status" value="1"/>
</dbReference>
<dbReference type="InterPro" id="IPR002068">
    <property type="entry name" value="A-crystallin/Hsp20_dom"/>
</dbReference>
<dbReference type="InterPro" id="IPR037913">
    <property type="entry name" value="ACD_IbpA/B"/>
</dbReference>
<dbReference type="InterPro" id="IPR008978">
    <property type="entry name" value="HSP20-like_chaperone"/>
</dbReference>
<dbReference type="InterPro" id="IPR022848">
    <property type="entry name" value="HSP20_IbpB"/>
</dbReference>
<dbReference type="NCBIfam" id="NF008618">
    <property type="entry name" value="PRK11597.1"/>
    <property type="match status" value="1"/>
</dbReference>
<dbReference type="PANTHER" id="PTHR47062">
    <property type="match status" value="1"/>
</dbReference>
<dbReference type="PANTHER" id="PTHR47062:SF2">
    <property type="entry name" value="SMALL HEAT SHOCK PROTEIN IBPB"/>
    <property type="match status" value="1"/>
</dbReference>
<dbReference type="Pfam" id="PF00011">
    <property type="entry name" value="HSP20"/>
    <property type="match status" value="1"/>
</dbReference>
<dbReference type="SUPFAM" id="SSF49764">
    <property type="entry name" value="HSP20-like chaperones"/>
    <property type="match status" value="1"/>
</dbReference>
<dbReference type="PROSITE" id="PS01031">
    <property type="entry name" value="SHSP"/>
    <property type="match status" value="1"/>
</dbReference>
<evidence type="ECO:0000255" key="1">
    <source>
        <dbReference type="HAMAP-Rule" id="MF_02001"/>
    </source>
</evidence>
<evidence type="ECO:0000255" key="2">
    <source>
        <dbReference type="PROSITE-ProRule" id="PRU00285"/>
    </source>
</evidence>
<accession>B7NQY6</accession>
<feature type="chain" id="PRO_1000189099" description="Small heat shock protein IbpB">
    <location>
        <begin position="1"/>
        <end position="142"/>
    </location>
</feature>
<feature type="domain" description="sHSP" evidence="2">
    <location>
        <begin position="26"/>
        <end position="137"/>
    </location>
</feature>
<protein>
    <recommendedName>
        <fullName evidence="1">Small heat shock protein IbpB</fullName>
    </recommendedName>
    <alternativeName>
        <fullName evidence="1">16 kDa heat shock protein B</fullName>
    </alternativeName>
</protein>
<gene>
    <name evidence="1" type="primary">ibpB</name>
    <name type="ordered locus">ECIAI39_4288</name>
</gene>
<name>IBPB_ECO7I</name>
<sequence>MRNFDLSPLMRQWIGFDKLANALQNAGESQSFPPYNIEKSDDNHYRITLALAGFRQEDLEILLEGTRLSVKGTPEQPKEEKKWLHQGLMNQPFSLSFTLAENMEVSGATFVNGLLHIDLIRNEPEPIAAQRIAISERPALNS</sequence>
<organism>
    <name type="scientific">Escherichia coli O7:K1 (strain IAI39 / ExPEC)</name>
    <dbReference type="NCBI Taxonomy" id="585057"/>
    <lineage>
        <taxon>Bacteria</taxon>
        <taxon>Pseudomonadati</taxon>
        <taxon>Pseudomonadota</taxon>
        <taxon>Gammaproteobacteria</taxon>
        <taxon>Enterobacterales</taxon>
        <taxon>Enterobacteriaceae</taxon>
        <taxon>Escherichia</taxon>
    </lineage>
</organism>
<comment type="function">
    <text evidence="1">Associates with aggregated proteins, together with IbpA, to stabilize and protect them from irreversible denaturation and extensive proteolysis during heat shock and oxidative stress. Aggregated proteins bound to the IbpAB complex are more efficiently refolded and reactivated by the ATP-dependent chaperone systems ClpB and DnaK/DnaJ/GrpE. Its activity is ATP-independent.</text>
</comment>
<comment type="subunit">
    <text evidence="1">Homodimer. Forms homomultimers of about 100-150 subunits at optimal growth temperatures. Conformation changes to oligomers at high temperatures or high ionic concentrations. The decrease in size of the multimers is accompanied by an increase in chaperone activity.</text>
</comment>
<comment type="subcellular location">
    <subcellularLocation>
        <location evidence="1">Cytoplasm</location>
    </subcellularLocation>
</comment>
<comment type="domain">
    <text evidence="1">The N- and C-terminal flexible termini are involved in oligomerization and in the binding of non-native substrate proteins, and are essential for chaperone activity.</text>
</comment>
<comment type="similarity">
    <text evidence="1 2">Belongs to the small heat shock protein (HSP20) family.</text>
</comment>
<keyword id="KW-0143">Chaperone</keyword>
<keyword id="KW-0963">Cytoplasm</keyword>
<keyword id="KW-0346">Stress response</keyword>
<proteinExistence type="inferred from homology"/>